<gene>
    <name type="primary">MED7</name>
    <name type="ordered locus">YALI0B17424g</name>
</gene>
<keyword id="KW-0010">Activator</keyword>
<keyword id="KW-0539">Nucleus</keyword>
<keyword id="KW-1185">Reference proteome</keyword>
<keyword id="KW-0804">Transcription</keyword>
<keyword id="KW-0805">Transcription regulation</keyword>
<proteinExistence type="inferred from homology"/>
<protein>
    <recommendedName>
        <fullName>Mediator of RNA polymerase II transcription subunit 7</fullName>
    </recommendedName>
    <alternativeName>
        <fullName>Mediator complex subunit 7</fullName>
    </alternativeName>
</protein>
<feature type="chain" id="PRO_0000303209" description="Mediator of RNA polymerase II transcription subunit 7">
    <location>
        <begin position="1"/>
        <end position="235"/>
    </location>
</feature>
<comment type="function">
    <text evidence="1">Component of the Mediator complex, a coactivator involved in the regulated transcription of nearly all RNA polymerase II-dependent genes. Mediator functions as a bridge to convey information from gene-specific regulatory proteins to the basal RNA polymerase II transcription machinery. Mediator is recruited to promoters by direct interactions with regulatory proteins and serves as a scaffold for the assembly of a functional preinitiation complex with RNA polymerase II and the general transcription factors (By similarity).</text>
</comment>
<comment type="subunit">
    <text evidence="1">Component of the Mediator complex.</text>
</comment>
<comment type="subcellular location">
    <subcellularLocation>
        <location evidence="1">Nucleus</location>
    </subcellularLocation>
</comment>
<comment type="similarity">
    <text evidence="2">Belongs to the Mediator complex subunit 7 family.</text>
</comment>
<name>MED7_YARLI</name>
<reference key="1">
    <citation type="journal article" date="2004" name="Nature">
        <title>Genome evolution in yeasts.</title>
        <authorList>
            <person name="Dujon B."/>
            <person name="Sherman D."/>
            <person name="Fischer G."/>
            <person name="Durrens P."/>
            <person name="Casaregola S."/>
            <person name="Lafontaine I."/>
            <person name="de Montigny J."/>
            <person name="Marck C."/>
            <person name="Neuveglise C."/>
            <person name="Talla E."/>
            <person name="Goffard N."/>
            <person name="Frangeul L."/>
            <person name="Aigle M."/>
            <person name="Anthouard V."/>
            <person name="Babour A."/>
            <person name="Barbe V."/>
            <person name="Barnay S."/>
            <person name="Blanchin S."/>
            <person name="Beckerich J.-M."/>
            <person name="Beyne E."/>
            <person name="Bleykasten C."/>
            <person name="Boisrame A."/>
            <person name="Boyer J."/>
            <person name="Cattolico L."/>
            <person name="Confanioleri F."/>
            <person name="de Daruvar A."/>
            <person name="Despons L."/>
            <person name="Fabre E."/>
            <person name="Fairhead C."/>
            <person name="Ferry-Dumazet H."/>
            <person name="Groppi A."/>
            <person name="Hantraye F."/>
            <person name="Hennequin C."/>
            <person name="Jauniaux N."/>
            <person name="Joyet P."/>
            <person name="Kachouri R."/>
            <person name="Kerrest A."/>
            <person name="Koszul R."/>
            <person name="Lemaire M."/>
            <person name="Lesur I."/>
            <person name="Ma L."/>
            <person name="Muller H."/>
            <person name="Nicaud J.-M."/>
            <person name="Nikolski M."/>
            <person name="Oztas S."/>
            <person name="Ozier-Kalogeropoulos O."/>
            <person name="Pellenz S."/>
            <person name="Potier S."/>
            <person name="Richard G.-F."/>
            <person name="Straub M.-L."/>
            <person name="Suleau A."/>
            <person name="Swennen D."/>
            <person name="Tekaia F."/>
            <person name="Wesolowski-Louvel M."/>
            <person name="Westhof E."/>
            <person name="Wirth B."/>
            <person name="Zeniou-Meyer M."/>
            <person name="Zivanovic Y."/>
            <person name="Bolotin-Fukuhara M."/>
            <person name="Thierry A."/>
            <person name="Bouchier C."/>
            <person name="Caudron B."/>
            <person name="Scarpelli C."/>
            <person name="Gaillardin C."/>
            <person name="Weissenbach J."/>
            <person name="Wincker P."/>
            <person name="Souciet J.-L."/>
        </authorList>
    </citation>
    <scope>NUCLEOTIDE SEQUENCE [LARGE SCALE GENOMIC DNA]</scope>
    <source>
        <strain>CLIB 122 / E 150</strain>
    </source>
</reference>
<sequence length="235" mass="26747">MERRKKQNEGLLSVYPPPPWYSRYFTDENVAKVKDLQSSDNSQLLEAPLKYLTPPSPPEAGAYHNFGDVWQVNDKLATLEDLGITQVYDGAAIRGEGQESGARVLELKKLTKSLLLAFVELTGIMGVSPEQFPAKFEHVRVLLINIHHILNEYRPHQARESLVTLMQQQINDKKQHVENIRQSCDKVRDTIRVLSKQFDQVDEFEETGGVTTEEVKYVSGKDKDLLVVKMAEQVL</sequence>
<dbReference type="EMBL" id="CR382128">
    <property type="protein sequence ID" value="CAG83269.1"/>
    <property type="molecule type" value="Genomic_DNA"/>
</dbReference>
<dbReference type="RefSeq" id="XP_501016.1">
    <property type="nucleotide sequence ID" value="XM_501016.1"/>
</dbReference>
<dbReference type="SMR" id="Q6CE96"/>
<dbReference type="FunCoup" id="Q6CE96">
    <property type="interactions" value="767"/>
</dbReference>
<dbReference type="STRING" id="284591.Q6CE96"/>
<dbReference type="EnsemblFungi" id="CAG83269">
    <property type="protein sequence ID" value="CAG83269"/>
    <property type="gene ID" value="YALI0_B17424g"/>
</dbReference>
<dbReference type="KEGG" id="yli:2907512"/>
<dbReference type="VEuPathDB" id="FungiDB:YALI0_B17424g"/>
<dbReference type="HOGENOM" id="CLU_065214_0_1_1"/>
<dbReference type="InParanoid" id="Q6CE96"/>
<dbReference type="OMA" id="IHDSYSM"/>
<dbReference type="OrthoDB" id="25970at4891"/>
<dbReference type="Proteomes" id="UP000001300">
    <property type="component" value="Chromosome B"/>
</dbReference>
<dbReference type="GO" id="GO:0070847">
    <property type="term" value="C:core mediator complex"/>
    <property type="evidence" value="ECO:0000318"/>
    <property type="project" value="GO_Central"/>
</dbReference>
<dbReference type="GO" id="GO:0016592">
    <property type="term" value="C:mediator complex"/>
    <property type="evidence" value="ECO:0000318"/>
    <property type="project" value="GO_Central"/>
</dbReference>
<dbReference type="GO" id="GO:0003713">
    <property type="term" value="F:transcription coactivator activity"/>
    <property type="evidence" value="ECO:0007669"/>
    <property type="project" value="EnsemblFungi"/>
</dbReference>
<dbReference type="GO" id="GO:0000122">
    <property type="term" value="P:negative regulation of transcription by RNA polymerase II"/>
    <property type="evidence" value="ECO:0007669"/>
    <property type="project" value="EnsemblFungi"/>
</dbReference>
<dbReference type="GO" id="GO:0032968">
    <property type="term" value="P:positive regulation of transcription elongation by RNA polymerase II"/>
    <property type="evidence" value="ECO:0007669"/>
    <property type="project" value="EnsemblFungi"/>
</dbReference>
<dbReference type="GO" id="GO:0060261">
    <property type="term" value="P:positive regulation of transcription initiation by RNA polymerase II"/>
    <property type="evidence" value="ECO:0007669"/>
    <property type="project" value="EnsemblFungi"/>
</dbReference>
<dbReference type="GO" id="GO:0006357">
    <property type="term" value="P:regulation of transcription by RNA polymerase II"/>
    <property type="evidence" value="ECO:0000318"/>
    <property type="project" value="GO_Central"/>
</dbReference>
<dbReference type="GO" id="GO:0051123">
    <property type="term" value="P:RNA polymerase II preinitiation complex assembly"/>
    <property type="evidence" value="ECO:0007669"/>
    <property type="project" value="EnsemblFungi"/>
</dbReference>
<dbReference type="Gene3D" id="6.10.140.1520">
    <property type="match status" value="1"/>
</dbReference>
<dbReference type="Gene3D" id="6.10.140.200">
    <property type="match status" value="1"/>
</dbReference>
<dbReference type="InterPro" id="IPR037212">
    <property type="entry name" value="Med7/Med21-like"/>
</dbReference>
<dbReference type="InterPro" id="IPR009244">
    <property type="entry name" value="Mediatior_Med7"/>
</dbReference>
<dbReference type="InterPro" id="IPR044888">
    <property type="entry name" value="Mediatior_Med7_sf"/>
</dbReference>
<dbReference type="PANTHER" id="PTHR21428">
    <property type="entry name" value="MEDIATOR OF RNA POLYMERASE II TRANSCRIPTION SUBUNIT 7"/>
    <property type="match status" value="1"/>
</dbReference>
<dbReference type="PANTHER" id="PTHR21428:SF11">
    <property type="entry name" value="MEDIATOR OF RNA POLYMERASE II TRANSCRIPTION SUBUNIT 7"/>
    <property type="match status" value="1"/>
</dbReference>
<dbReference type="Pfam" id="PF05983">
    <property type="entry name" value="Med7"/>
    <property type="match status" value="1"/>
</dbReference>
<dbReference type="SUPFAM" id="SSF140718">
    <property type="entry name" value="Mediator hinge subcomplex-like"/>
    <property type="match status" value="1"/>
</dbReference>
<accession>Q6CE96</accession>
<evidence type="ECO:0000250" key="1"/>
<evidence type="ECO:0000305" key="2"/>
<organism>
    <name type="scientific">Yarrowia lipolytica (strain CLIB 122 / E 150)</name>
    <name type="common">Yeast</name>
    <name type="synonym">Candida lipolytica</name>
    <dbReference type="NCBI Taxonomy" id="284591"/>
    <lineage>
        <taxon>Eukaryota</taxon>
        <taxon>Fungi</taxon>
        <taxon>Dikarya</taxon>
        <taxon>Ascomycota</taxon>
        <taxon>Saccharomycotina</taxon>
        <taxon>Dipodascomycetes</taxon>
        <taxon>Dipodascales</taxon>
        <taxon>Dipodascales incertae sedis</taxon>
        <taxon>Yarrowia</taxon>
    </lineage>
</organism>